<sequence length="264" mass="28408">MSNKLTEICDTKRDHVARRKAETSFAELTARAKAADAPRGFRAALDRKVAEGGYGLIAEIKKASPSKGLIRPDFDPPAHARAYQAAGAACLSVLTDMPYFQGHDDYLVQARAACALPALRKDFIVDPWQVTEARALGADAILIIVAALDDGQMAEIEAAAIEHGMDALVEVHDADEFDRALRLRSRLIGVNNRDLRDFTIDFARTYELVGHAPAGCTFVAESGLGSKADLDAMADHGVGCFLVGESLMRQDDLAAATRRLLTGA</sequence>
<dbReference type="EC" id="4.1.1.48" evidence="1"/>
<dbReference type="EMBL" id="CP000699">
    <property type="protein sequence ID" value="ABQ69566.1"/>
    <property type="molecule type" value="Genomic_DNA"/>
</dbReference>
<dbReference type="SMR" id="A5VBA0"/>
<dbReference type="STRING" id="392499.Swit_3219"/>
<dbReference type="PaxDb" id="392499-Swit_3219"/>
<dbReference type="KEGG" id="swi:Swit_3219"/>
<dbReference type="eggNOG" id="COG0134">
    <property type="taxonomic scope" value="Bacteria"/>
</dbReference>
<dbReference type="HOGENOM" id="CLU_034247_2_0_5"/>
<dbReference type="OrthoDB" id="9804217at2"/>
<dbReference type="UniPathway" id="UPA00035">
    <property type="reaction ID" value="UER00043"/>
</dbReference>
<dbReference type="Proteomes" id="UP000001989">
    <property type="component" value="Chromosome"/>
</dbReference>
<dbReference type="GO" id="GO:0004425">
    <property type="term" value="F:indole-3-glycerol-phosphate synthase activity"/>
    <property type="evidence" value="ECO:0007669"/>
    <property type="project" value="UniProtKB-UniRule"/>
</dbReference>
<dbReference type="GO" id="GO:0004640">
    <property type="term" value="F:phosphoribosylanthranilate isomerase activity"/>
    <property type="evidence" value="ECO:0007669"/>
    <property type="project" value="TreeGrafter"/>
</dbReference>
<dbReference type="GO" id="GO:0000162">
    <property type="term" value="P:L-tryptophan biosynthetic process"/>
    <property type="evidence" value="ECO:0007669"/>
    <property type="project" value="UniProtKB-UniRule"/>
</dbReference>
<dbReference type="CDD" id="cd00331">
    <property type="entry name" value="IGPS"/>
    <property type="match status" value="1"/>
</dbReference>
<dbReference type="FunFam" id="3.20.20.70:FF:000024">
    <property type="entry name" value="Indole-3-glycerol phosphate synthase"/>
    <property type="match status" value="1"/>
</dbReference>
<dbReference type="Gene3D" id="3.20.20.70">
    <property type="entry name" value="Aldolase class I"/>
    <property type="match status" value="1"/>
</dbReference>
<dbReference type="HAMAP" id="MF_00134_B">
    <property type="entry name" value="IGPS_B"/>
    <property type="match status" value="1"/>
</dbReference>
<dbReference type="InterPro" id="IPR013785">
    <property type="entry name" value="Aldolase_TIM"/>
</dbReference>
<dbReference type="InterPro" id="IPR045186">
    <property type="entry name" value="Indole-3-glycerol_P_synth"/>
</dbReference>
<dbReference type="InterPro" id="IPR013798">
    <property type="entry name" value="Indole-3-glycerol_P_synth_dom"/>
</dbReference>
<dbReference type="InterPro" id="IPR001468">
    <property type="entry name" value="Indole-3-GlycerolPSynthase_CS"/>
</dbReference>
<dbReference type="InterPro" id="IPR011060">
    <property type="entry name" value="RibuloseP-bd_barrel"/>
</dbReference>
<dbReference type="NCBIfam" id="NF001370">
    <property type="entry name" value="PRK00278.1-2"/>
    <property type="match status" value="1"/>
</dbReference>
<dbReference type="NCBIfam" id="NF001373">
    <property type="entry name" value="PRK00278.1-6"/>
    <property type="match status" value="1"/>
</dbReference>
<dbReference type="NCBIfam" id="NF001377">
    <property type="entry name" value="PRK00278.2-4"/>
    <property type="match status" value="1"/>
</dbReference>
<dbReference type="PANTHER" id="PTHR22854:SF2">
    <property type="entry name" value="INDOLE-3-GLYCEROL-PHOSPHATE SYNTHASE"/>
    <property type="match status" value="1"/>
</dbReference>
<dbReference type="PANTHER" id="PTHR22854">
    <property type="entry name" value="TRYPTOPHAN BIOSYNTHESIS PROTEIN"/>
    <property type="match status" value="1"/>
</dbReference>
<dbReference type="Pfam" id="PF00218">
    <property type="entry name" value="IGPS"/>
    <property type="match status" value="1"/>
</dbReference>
<dbReference type="SUPFAM" id="SSF51366">
    <property type="entry name" value="Ribulose-phoshate binding barrel"/>
    <property type="match status" value="1"/>
</dbReference>
<dbReference type="PROSITE" id="PS00614">
    <property type="entry name" value="IGPS"/>
    <property type="match status" value="1"/>
</dbReference>
<comment type="catalytic activity">
    <reaction evidence="1">
        <text>1-(2-carboxyphenylamino)-1-deoxy-D-ribulose 5-phosphate + H(+) = (1S,2R)-1-C-(indol-3-yl)glycerol 3-phosphate + CO2 + H2O</text>
        <dbReference type="Rhea" id="RHEA:23476"/>
        <dbReference type="ChEBI" id="CHEBI:15377"/>
        <dbReference type="ChEBI" id="CHEBI:15378"/>
        <dbReference type="ChEBI" id="CHEBI:16526"/>
        <dbReference type="ChEBI" id="CHEBI:58613"/>
        <dbReference type="ChEBI" id="CHEBI:58866"/>
        <dbReference type="EC" id="4.1.1.48"/>
    </reaction>
</comment>
<comment type="pathway">
    <text evidence="1">Amino-acid biosynthesis; L-tryptophan biosynthesis; L-tryptophan from chorismate: step 4/5.</text>
</comment>
<comment type="similarity">
    <text evidence="1">Belongs to the TrpC family.</text>
</comment>
<organism>
    <name type="scientific">Rhizorhabdus wittichii (strain DSM 6014 / CCUG 31198 / JCM 15750 / NBRC 105917 / EY 4224 / RW1)</name>
    <name type="common">Sphingomonas wittichii</name>
    <dbReference type="NCBI Taxonomy" id="392499"/>
    <lineage>
        <taxon>Bacteria</taxon>
        <taxon>Pseudomonadati</taxon>
        <taxon>Pseudomonadota</taxon>
        <taxon>Alphaproteobacteria</taxon>
        <taxon>Sphingomonadales</taxon>
        <taxon>Sphingomonadaceae</taxon>
        <taxon>Rhizorhabdus</taxon>
    </lineage>
</organism>
<feature type="chain" id="PRO_1000018553" description="Indole-3-glycerol phosphate synthase">
    <location>
        <begin position="1"/>
        <end position="264"/>
    </location>
</feature>
<reference key="1">
    <citation type="journal article" date="2010" name="J. Bacteriol.">
        <title>Genome sequence of the dioxin-mineralizing bacterium Sphingomonas wittichii RW1.</title>
        <authorList>
            <person name="Miller T.R."/>
            <person name="Delcher A.L."/>
            <person name="Salzberg S.L."/>
            <person name="Saunders E."/>
            <person name="Detter J.C."/>
            <person name="Halden R.U."/>
        </authorList>
    </citation>
    <scope>NUCLEOTIDE SEQUENCE [LARGE SCALE GENOMIC DNA]</scope>
    <source>
        <strain>DSM 6014 / CCUG 31198 / JCM 15750 / NBRC 105917 / EY 4224 / RW1</strain>
    </source>
</reference>
<accession>A5VBA0</accession>
<gene>
    <name evidence="1" type="primary">trpC</name>
    <name type="ordered locus">Swit_3219</name>
</gene>
<proteinExistence type="inferred from homology"/>
<evidence type="ECO:0000255" key="1">
    <source>
        <dbReference type="HAMAP-Rule" id="MF_00134"/>
    </source>
</evidence>
<keyword id="KW-0028">Amino-acid biosynthesis</keyword>
<keyword id="KW-0057">Aromatic amino acid biosynthesis</keyword>
<keyword id="KW-0210">Decarboxylase</keyword>
<keyword id="KW-0456">Lyase</keyword>
<keyword id="KW-1185">Reference proteome</keyword>
<keyword id="KW-0822">Tryptophan biosynthesis</keyword>
<protein>
    <recommendedName>
        <fullName evidence="1">Indole-3-glycerol phosphate synthase</fullName>
        <shortName evidence="1">IGPS</shortName>
        <ecNumber evidence="1">4.1.1.48</ecNumber>
    </recommendedName>
</protein>
<name>TRPC_RHIWR</name>